<sequence>MNLNSIPAFDDNYIWVLNDEAGRCLIVDPGDAEPVLNAISANNWQPEAIFLTHHHHDHVGGVKELVEKFPQIVVYGPQETQDKGTTQVVKDGETAFVLGHEFSVIATPGHTLGHICYFSKPYLFCGDTLFSGGCGRLFEGTPSQMYQSIKKLSALPDDTLVCCAHEYTLSNMKFALSILPHDLSINDYYRKVKELRAKNQITLPVILKNERQINVFLRTEDIDLINVINEETLLKQPEERFAWLRSKKDRF</sequence>
<keyword id="KW-0378">Hydrolase</keyword>
<keyword id="KW-0479">Metal-binding</keyword>
<keyword id="KW-0862">Zinc</keyword>
<comment type="function">
    <text evidence="1">Thiolesterase that catalyzes the hydrolysis of S-D-lactoyl-glutathione to form glutathione and D-lactic acid.</text>
</comment>
<comment type="catalytic activity">
    <reaction evidence="1">
        <text>an S-(2-hydroxyacyl)glutathione + H2O = a 2-hydroxy carboxylate + glutathione + H(+)</text>
        <dbReference type="Rhea" id="RHEA:21864"/>
        <dbReference type="ChEBI" id="CHEBI:15377"/>
        <dbReference type="ChEBI" id="CHEBI:15378"/>
        <dbReference type="ChEBI" id="CHEBI:57925"/>
        <dbReference type="ChEBI" id="CHEBI:58896"/>
        <dbReference type="ChEBI" id="CHEBI:71261"/>
        <dbReference type="EC" id="3.1.2.6"/>
    </reaction>
</comment>
<comment type="cofactor">
    <cofactor evidence="1">
        <name>Zn(2+)</name>
        <dbReference type="ChEBI" id="CHEBI:29105"/>
    </cofactor>
    <text evidence="1">Binds 2 Zn(2+) ions per subunit.</text>
</comment>
<comment type="pathway">
    <text evidence="1">Secondary metabolite metabolism; methylglyoxal degradation; (R)-lactate from methylglyoxal: step 2/2.</text>
</comment>
<comment type="subunit">
    <text evidence="1">Monomer.</text>
</comment>
<comment type="similarity">
    <text evidence="1">Belongs to the metallo-beta-lactamase superfamily. Glyoxalase II family.</text>
</comment>
<name>GLO2_ECOUT</name>
<feature type="chain" id="PRO_0000309637" description="Hydroxyacylglutathione hydrolase">
    <location>
        <begin position="1"/>
        <end position="251"/>
    </location>
</feature>
<feature type="binding site" evidence="1">
    <location>
        <position position="53"/>
    </location>
    <ligand>
        <name>Zn(2+)</name>
        <dbReference type="ChEBI" id="CHEBI:29105"/>
        <label>1</label>
    </ligand>
</feature>
<feature type="binding site" evidence="1">
    <location>
        <position position="55"/>
    </location>
    <ligand>
        <name>Zn(2+)</name>
        <dbReference type="ChEBI" id="CHEBI:29105"/>
        <label>1</label>
    </ligand>
</feature>
<feature type="binding site" evidence="1">
    <location>
        <position position="57"/>
    </location>
    <ligand>
        <name>Zn(2+)</name>
        <dbReference type="ChEBI" id="CHEBI:29105"/>
        <label>2</label>
    </ligand>
</feature>
<feature type="binding site" evidence="1">
    <location>
        <position position="58"/>
    </location>
    <ligand>
        <name>Zn(2+)</name>
        <dbReference type="ChEBI" id="CHEBI:29105"/>
        <label>2</label>
    </ligand>
</feature>
<feature type="binding site" evidence="1">
    <location>
        <position position="110"/>
    </location>
    <ligand>
        <name>Zn(2+)</name>
        <dbReference type="ChEBI" id="CHEBI:29105"/>
        <label>1</label>
    </ligand>
</feature>
<feature type="binding site" evidence="1">
    <location>
        <position position="127"/>
    </location>
    <ligand>
        <name>Zn(2+)</name>
        <dbReference type="ChEBI" id="CHEBI:29105"/>
        <label>1</label>
    </ligand>
</feature>
<feature type="binding site" evidence="1">
    <location>
        <position position="127"/>
    </location>
    <ligand>
        <name>Zn(2+)</name>
        <dbReference type="ChEBI" id="CHEBI:29105"/>
        <label>2</label>
    </ligand>
</feature>
<feature type="binding site" evidence="1">
    <location>
        <position position="165"/>
    </location>
    <ligand>
        <name>Zn(2+)</name>
        <dbReference type="ChEBI" id="CHEBI:29105"/>
        <label>2</label>
    </ligand>
</feature>
<reference key="1">
    <citation type="journal article" date="2006" name="Proc. Natl. Acad. Sci. U.S.A.">
        <title>Identification of genes subject to positive selection in uropathogenic strains of Escherichia coli: a comparative genomics approach.</title>
        <authorList>
            <person name="Chen S.L."/>
            <person name="Hung C.-S."/>
            <person name="Xu J."/>
            <person name="Reigstad C.S."/>
            <person name="Magrini V."/>
            <person name="Sabo A."/>
            <person name="Blasiar D."/>
            <person name="Bieri T."/>
            <person name="Meyer R.R."/>
            <person name="Ozersky P."/>
            <person name="Armstrong J.R."/>
            <person name="Fulton R.S."/>
            <person name="Latreille J.P."/>
            <person name="Spieth J."/>
            <person name="Hooton T.M."/>
            <person name="Mardis E.R."/>
            <person name="Hultgren S.J."/>
            <person name="Gordon J.I."/>
        </authorList>
    </citation>
    <scope>NUCLEOTIDE SEQUENCE [LARGE SCALE GENOMIC DNA]</scope>
    <source>
        <strain>UTI89 / UPEC</strain>
    </source>
</reference>
<organism>
    <name type="scientific">Escherichia coli (strain UTI89 / UPEC)</name>
    <dbReference type="NCBI Taxonomy" id="364106"/>
    <lineage>
        <taxon>Bacteria</taxon>
        <taxon>Pseudomonadati</taxon>
        <taxon>Pseudomonadota</taxon>
        <taxon>Gammaproteobacteria</taxon>
        <taxon>Enterobacterales</taxon>
        <taxon>Enterobacteriaceae</taxon>
        <taxon>Escherichia</taxon>
    </lineage>
</organism>
<evidence type="ECO:0000255" key="1">
    <source>
        <dbReference type="HAMAP-Rule" id="MF_01374"/>
    </source>
</evidence>
<protein>
    <recommendedName>
        <fullName evidence="1">Hydroxyacylglutathione hydrolase</fullName>
        <ecNumber evidence="1">3.1.2.6</ecNumber>
    </recommendedName>
    <alternativeName>
        <fullName evidence="1">Glyoxalase II</fullName>
        <shortName evidence="1">Glx II</shortName>
    </alternativeName>
</protein>
<dbReference type="EC" id="3.1.2.6" evidence="1"/>
<dbReference type="EMBL" id="CP000243">
    <property type="protein sequence ID" value="ABE05735.1"/>
    <property type="molecule type" value="Genomic_DNA"/>
</dbReference>
<dbReference type="RefSeq" id="WP_001052740.1">
    <property type="nucleotide sequence ID" value="NZ_CP064825.1"/>
</dbReference>
<dbReference type="SMR" id="Q1RFX9"/>
<dbReference type="KEGG" id="eci:UTI89_C0231"/>
<dbReference type="HOGENOM" id="CLU_030571_4_1_6"/>
<dbReference type="UniPathway" id="UPA00619">
    <property type="reaction ID" value="UER00676"/>
</dbReference>
<dbReference type="Proteomes" id="UP000001952">
    <property type="component" value="Chromosome"/>
</dbReference>
<dbReference type="GO" id="GO:0004416">
    <property type="term" value="F:hydroxyacylglutathione hydrolase activity"/>
    <property type="evidence" value="ECO:0007669"/>
    <property type="project" value="UniProtKB-UniRule"/>
</dbReference>
<dbReference type="GO" id="GO:0046872">
    <property type="term" value="F:metal ion binding"/>
    <property type="evidence" value="ECO:0007669"/>
    <property type="project" value="UniProtKB-KW"/>
</dbReference>
<dbReference type="GO" id="GO:0019243">
    <property type="term" value="P:methylglyoxal catabolic process to D-lactate via S-lactoyl-glutathione"/>
    <property type="evidence" value="ECO:0007669"/>
    <property type="project" value="InterPro"/>
</dbReference>
<dbReference type="CDD" id="cd07723">
    <property type="entry name" value="hydroxyacylglutathione_hydrolase_MBL-fold"/>
    <property type="match status" value="1"/>
</dbReference>
<dbReference type="FunFam" id="3.60.15.10:FF:000012">
    <property type="entry name" value="Hydroxyacylglutathione hydrolase"/>
    <property type="match status" value="1"/>
</dbReference>
<dbReference type="Gene3D" id="3.60.15.10">
    <property type="entry name" value="Ribonuclease Z/Hydroxyacylglutathione hydrolase-like"/>
    <property type="match status" value="1"/>
</dbReference>
<dbReference type="HAMAP" id="MF_01374">
    <property type="entry name" value="Glyoxalase_2"/>
    <property type="match status" value="1"/>
</dbReference>
<dbReference type="InterPro" id="IPR035680">
    <property type="entry name" value="Clx_II_MBL"/>
</dbReference>
<dbReference type="InterPro" id="IPR050110">
    <property type="entry name" value="Glyoxalase_II_hydrolase"/>
</dbReference>
<dbReference type="InterPro" id="IPR032282">
    <property type="entry name" value="HAGH_C"/>
</dbReference>
<dbReference type="InterPro" id="IPR017782">
    <property type="entry name" value="Hydroxyacylglutathione_Hdrlase"/>
</dbReference>
<dbReference type="InterPro" id="IPR001279">
    <property type="entry name" value="Metallo-B-lactamas"/>
</dbReference>
<dbReference type="InterPro" id="IPR036866">
    <property type="entry name" value="RibonucZ/Hydroxyglut_hydro"/>
</dbReference>
<dbReference type="NCBIfam" id="TIGR03413">
    <property type="entry name" value="GSH_gloB"/>
    <property type="match status" value="1"/>
</dbReference>
<dbReference type="NCBIfam" id="NF007597">
    <property type="entry name" value="PRK10241.1"/>
    <property type="match status" value="1"/>
</dbReference>
<dbReference type="PANTHER" id="PTHR43705">
    <property type="entry name" value="HYDROXYACYLGLUTATHIONE HYDROLASE"/>
    <property type="match status" value="1"/>
</dbReference>
<dbReference type="PANTHER" id="PTHR43705:SF1">
    <property type="entry name" value="HYDROXYACYLGLUTATHIONE HYDROLASE GLOB"/>
    <property type="match status" value="1"/>
</dbReference>
<dbReference type="Pfam" id="PF16123">
    <property type="entry name" value="HAGH_C"/>
    <property type="match status" value="1"/>
</dbReference>
<dbReference type="Pfam" id="PF00753">
    <property type="entry name" value="Lactamase_B"/>
    <property type="match status" value="1"/>
</dbReference>
<dbReference type="PIRSF" id="PIRSF005457">
    <property type="entry name" value="Glx"/>
    <property type="match status" value="1"/>
</dbReference>
<dbReference type="SMART" id="SM00849">
    <property type="entry name" value="Lactamase_B"/>
    <property type="match status" value="1"/>
</dbReference>
<dbReference type="SUPFAM" id="SSF56281">
    <property type="entry name" value="Metallo-hydrolase/oxidoreductase"/>
    <property type="match status" value="1"/>
</dbReference>
<proteinExistence type="inferred from homology"/>
<accession>Q1RFX9</accession>
<gene>
    <name evidence="1" type="primary">gloB</name>
    <name type="ordered locus">UTI89_C0231</name>
</gene>